<evidence type="ECO:0000269" key="1">
    <source>
    </source>
</evidence>
<evidence type="ECO:0000269" key="2">
    <source>
    </source>
</evidence>
<evidence type="ECO:0000269" key="3">
    <source>
    </source>
</evidence>
<evidence type="ECO:0000303" key="4">
    <source>
    </source>
</evidence>
<evidence type="ECO:0000303" key="5">
    <source>
    </source>
</evidence>
<evidence type="ECO:0000305" key="6"/>
<evidence type="ECO:0000312" key="7">
    <source>
        <dbReference type="Araport" id="AT3G18130"/>
    </source>
</evidence>
<evidence type="ECO:0000312" key="8">
    <source>
        <dbReference type="EMBL" id="BAB02025.1"/>
    </source>
</evidence>
<dbReference type="EMBL" id="AB020749">
    <property type="protein sequence ID" value="BAB02025.1"/>
    <property type="molecule type" value="Genomic_DNA"/>
</dbReference>
<dbReference type="EMBL" id="CP002686">
    <property type="protein sequence ID" value="AEE76051.1"/>
    <property type="molecule type" value="Genomic_DNA"/>
</dbReference>
<dbReference type="EMBL" id="AY050338">
    <property type="protein sequence ID" value="AAK91355.1"/>
    <property type="molecule type" value="mRNA"/>
</dbReference>
<dbReference type="EMBL" id="AY101529">
    <property type="protein sequence ID" value="AAM26650.1"/>
    <property type="molecule type" value="mRNA"/>
</dbReference>
<dbReference type="RefSeq" id="NP_188441.1">
    <property type="nucleotide sequence ID" value="NM_112695.3"/>
</dbReference>
<dbReference type="SMR" id="Q9LV28"/>
<dbReference type="BioGRID" id="6671">
    <property type="interactions" value="32"/>
</dbReference>
<dbReference type="FunCoup" id="Q9LV28">
    <property type="interactions" value="3532"/>
</dbReference>
<dbReference type="IntAct" id="Q9LV28">
    <property type="interactions" value="1"/>
</dbReference>
<dbReference type="STRING" id="3702.Q9LV28"/>
<dbReference type="PaxDb" id="3702-AT3G18130.1"/>
<dbReference type="ProteomicsDB" id="248473"/>
<dbReference type="EnsemblPlants" id="AT3G18130.1">
    <property type="protein sequence ID" value="AT3G18130.1"/>
    <property type="gene ID" value="AT3G18130"/>
</dbReference>
<dbReference type="GeneID" id="821338"/>
<dbReference type="Gramene" id="AT3G18130.1">
    <property type="protein sequence ID" value="AT3G18130.1"/>
    <property type="gene ID" value="AT3G18130"/>
</dbReference>
<dbReference type="KEGG" id="ath:AT3G18130"/>
<dbReference type="Araport" id="AT3G18130"/>
<dbReference type="TAIR" id="AT3G18130">
    <property type="gene designation" value="RACK1C_AT"/>
</dbReference>
<dbReference type="eggNOG" id="KOG0279">
    <property type="taxonomic scope" value="Eukaryota"/>
</dbReference>
<dbReference type="HOGENOM" id="CLU_000288_57_7_1"/>
<dbReference type="InParanoid" id="Q9LV28"/>
<dbReference type="OMA" id="DGHKEWI"/>
<dbReference type="PhylomeDB" id="Q9LV28"/>
<dbReference type="CD-CODE" id="4299E36E">
    <property type="entry name" value="Nucleolus"/>
</dbReference>
<dbReference type="PRO" id="PR:Q9LV28"/>
<dbReference type="Proteomes" id="UP000006548">
    <property type="component" value="Chromosome 3"/>
</dbReference>
<dbReference type="ExpressionAtlas" id="Q9LV28">
    <property type="expression patterns" value="baseline and differential"/>
</dbReference>
<dbReference type="GO" id="GO:0005829">
    <property type="term" value="C:cytosol"/>
    <property type="evidence" value="ECO:0007005"/>
    <property type="project" value="TAIR"/>
</dbReference>
<dbReference type="GO" id="GO:0005730">
    <property type="term" value="C:nucleolus"/>
    <property type="evidence" value="ECO:0007005"/>
    <property type="project" value="TAIR"/>
</dbReference>
<dbReference type="GO" id="GO:1990904">
    <property type="term" value="C:ribonucleoprotein complex"/>
    <property type="evidence" value="ECO:0007669"/>
    <property type="project" value="UniProtKB-KW"/>
</dbReference>
<dbReference type="GO" id="GO:0005840">
    <property type="term" value="C:ribosome"/>
    <property type="evidence" value="ECO:0007669"/>
    <property type="project" value="UniProtKB-KW"/>
</dbReference>
<dbReference type="GO" id="GO:0005078">
    <property type="term" value="F:MAP-kinase scaffold activity"/>
    <property type="evidence" value="ECO:0000315"/>
    <property type="project" value="UniProtKB"/>
</dbReference>
<dbReference type="GO" id="GO:0043022">
    <property type="term" value="F:ribosome binding"/>
    <property type="evidence" value="ECO:0007669"/>
    <property type="project" value="InterPro"/>
</dbReference>
<dbReference type="GO" id="GO:0045182">
    <property type="term" value="F:translation regulator activity"/>
    <property type="evidence" value="ECO:0007669"/>
    <property type="project" value="InterPro"/>
</dbReference>
<dbReference type="GO" id="GO:0071215">
    <property type="term" value="P:cellular response to abscisic acid stimulus"/>
    <property type="evidence" value="ECO:0000270"/>
    <property type="project" value="TAIR"/>
</dbReference>
<dbReference type="GO" id="GO:0009967">
    <property type="term" value="P:positive regulation of signal transduction"/>
    <property type="evidence" value="ECO:0000315"/>
    <property type="project" value="UniProtKB"/>
</dbReference>
<dbReference type="GO" id="GO:0048364">
    <property type="term" value="P:root development"/>
    <property type="evidence" value="ECO:0000316"/>
    <property type="project" value="TAIR"/>
</dbReference>
<dbReference type="GO" id="GO:0009845">
    <property type="term" value="P:seed germination"/>
    <property type="evidence" value="ECO:0000316"/>
    <property type="project" value="TAIR"/>
</dbReference>
<dbReference type="GO" id="GO:0048367">
    <property type="term" value="P:shoot system development"/>
    <property type="evidence" value="ECO:0000316"/>
    <property type="project" value="TAIR"/>
</dbReference>
<dbReference type="CDD" id="cd00200">
    <property type="entry name" value="WD40"/>
    <property type="match status" value="1"/>
</dbReference>
<dbReference type="FunFam" id="2.130.10.10:FF:000018">
    <property type="entry name" value="Receptor for activated C kinase 1"/>
    <property type="match status" value="1"/>
</dbReference>
<dbReference type="Gene3D" id="2.130.10.10">
    <property type="entry name" value="YVTN repeat-like/Quinoprotein amine dehydrogenase"/>
    <property type="match status" value="1"/>
</dbReference>
<dbReference type="InterPro" id="IPR020472">
    <property type="entry name" value="G-protein_beta_WD-40_rep"/>
</dbReference>
<dbReference type="InterPro" id="IPR045223">
    <property type="entry name" value="RACK1-like"/>
</dbReference>
<dbReference type="InterPro" id="IPR015943">
    <property type="entry name" value="WD40/YVTN_repeat-like_dom_sf"/>
</dbReference>
<dbReference type="InterPro" id="IPR019775">
    <property type="entry name" value="WD40_repeat_CS"/>
</dbReference>
<dbReference type="InterPro" id="IPR036322">
    <property type="entry name" value="WD40_repeat_dom_sf"/>
</dbReference>
<dbReference type="InterPro" id="IPR001680">
    <property type="entry name" value="WD40_rpt"/>
</dbReference>
<dbReference type="PANTHER" id="PTHR19868">
    <property type="entry name" value="RECEPTOR FOR ACTIVATED PROTEIN KINASE C RACK1"/>
    <property type="match status" value="1"/>
</dbReference>
<dbReference type="Pfam" id="PF00400">
    <property type="entry name" value="WD40"/>
    <property type="match status" value="7"/>
</dbReference>
<dbReference type="PRINTS" id="PR00320">
    <property type="entry name" value="GPROTEINBRPT"/>
</dbReference>
<dbReference type="SMART" id="SM00320">
    <property type="entry name" value="WD40"/>
    <property type="match status" value="7"/>
</dbReference>
<dbReference type="SUPFAM" id="SSF50978">
    <property type="entry name" value="WD40 repeat-like"/>
    <property type="match status" value="1"/>
</dbReference>
<dbReference type="PROSITE" id="PS00678">
    <property type="entry name" value="WD_REPEATS_1"/>
    <property type="match status" value="4"/>
</dbReference>
<dbReference type="PROSITE" id="PS50082">
    <property type="entry name" value="WD_REPEATS_2"/>
    <property type="match status" value="7"/>
</dbReference>
<dbReference type="PROSITE" id="PS50294">
    <property type="entry name" value="WD_REPEATS_REGION"/>
    <property type="match status" value="1"/>
</dbReference>
<organism>
    <name type="scientific">Arabidopsis thaliana</name>
    <name type="common">Mouse-ear cress</name>
    <dbReference type="NCBI Taxonomy" id="3702"/>
    <lineage>
        <taxon>Eukaryota</taxon>
        <taxon>Viridiplantae</taxon>
        <taxon>Streptophyta</taxon>
        <taxon>Embryophyta</taxon>
        <taxon>Tracheophyta</taxon>
        <taxon>Spermatophyta</taxon>
        <taxon>Magnoliopsida</taxon>
        <taxon>eudicotyledons</taxon>
        <taxon>Gunneridae</taxon>
        <taxon>Pentapetalae</taxon>
        <taxon>rosids</taxon>
        <taxon>malvids</taxon>
        <taxon>Brassicales</taxon>
        <taxon>Brassicaceae</taxon>
        <taxon>Camelineae</taxon>
        <taxon>Arabidopsis</taxon>
    </lineage>
</organism>
<comment type="function">
    <text evidence="2 3">Minor component of the RACK1 regulatory proteins that play a role in multiple signal transduction pathways. Involved in multiple hormone responses and developmental processes (PubMed:18947417). MAPK cascade scaffolding protein involved in the protease IV and ArgC signaling pathway but not the flg22 pathway (PubMed:25731164).</text>
</comment>
<comment type="subunit">
    <text evidence="3 6">Homodimer and heterodimer with RACK1A or RACK1B (Probable). Interacts with GB1, MEKK1, MKK4, MKK5, MPK3 and MPK6, but not with GPA1 or MPK4 (PubMed:25731164).</text>
</comment>
<comment type="tissue specificity">
    <text evidence="1 2">Widely expressed.</text>
</comment>
<comment type="disruption phenotype">
    <text evidence="2">No visible phenotype under normal growth condition.</text>
</comment>
<comment type="similarity">
    <text evidence="6">Belongs to the WD repeat G protein beta family. Ribosomal protein RACK1 subfamily.</text>
</comment>
<proteinExistence type="evidence at protein level"/>
<name>GPLPC_ARATH</name>
<sequence length="326" mass="35828">MAEGLVLKGIMRAHTDIVTAIATPIDNSDIIVTASRDKSIILWKLTKDDKSYGVAQRRLTGHSHFVEDVVLSSDGQFALSGSWDGELRLWDLATGETTRRFVGHTKDVLSVAFSTDNRQIVSASRDRTIKLWNTLGECKYTISEGDGHKEWVSCVRFSPNTLVPTIVSASWDKTVKVWNLQNCKLRNSLVGHSGYLNTVAVSPDGSLCASGGKDGVILLWDLAEGKKLYSLEAGSIIHSLCFSPNRYWLCAATENSIRIWDLESKSVVEDLKVDLKSEAEKNEGGVGTGNQKKVIYCTSLNWSADGSTLFSGYTDGVVRVWGIGRY</sequence>
<keyword id="KW-1185">Reference proteome</keyword>
<keyword id="KW-0677">Repeat</keyword>
<keyword id="KW-0687">Ribonucleoprotein</keyword>
<keyword id="KW-0689">Ribosomal protein</keyword>
<keyword id="KW-0807">Transducer</keyword>
<keyword id="KW-0853">WD repeat</keyword>
<protein>
    <recommendedName>
        <fullName evidence="5">Small ribosomal subunit protein RACK1x</fullName>
    </recommendedName>
    <alternativeName>
        <fullName>Guanine nucleotide-binding protein subunit beta-like protein C</fullName>
    </alternativeName>
    <alternativeName>
        <fullName evidence="4">Receptor for activated C kinase 1C</fullName>
    </alternativeName>
</protein>
<gene>
    <name evidence="4" type="primary">RACK1C</name>
    <name evidence="7" type="ordered locus">At3g18130</name>
    <name evidence="8" type="ORF">MRC8.11</name>
</gene>
<reference key="1">
    <citation type="journal article" date="2000" name="DNA Res.">
        <title>Structural analysis of Arabidopsis thaliana chromosome 3. II. Sequence features of the 4,251,695 bp regions covered by 90 P1, TAC and BAC clones.</title>
        <authorList>
            <person name="Kaneko T."/>
            <person name="Katoh T."/>
            <person name="Sato S."/>
            <person name="Nakamura Y."/>
            <person name="Asamizu E."/>
            <person name="Tabata S."/>
        </authorList>
    </citation>
    <scope>NUCLEOTIDE SEQUENCE [LARGE SCALE GENOMIC DNA]</scope>
    <source>
        <strain>cv. Columbia</strain>
    </source>
</reference>
<reference key="2">
    <citation type="journal article" date="2017" name="Plant J.">
        <title>Araport11: a complete reannotation of the Arabidopsis thaliana reference genome.</title>
        <authorList>
            <person name="Cheng C.Y."/>
            <person name="Krishnakumar V."/>
            <person name="Chan A.P."/>
            <person name="Thibaud-Nissen F."/>
            <person name="Schobel S."/>
            <person name="Town C.D."/>
        </authorList>
    </citation>
    <scope>GENOME REANNOTATION</scope>
    <source>
        <strain>cv. Columbia</strain>
    </source>
</reference>
<reference key="3">
    <citation type="journal article" date="2003" name="Science">
        <title>Empirical analysis of transcriptional activity in the Arabidopsis genome.</title>
        <authorList>
            <person name="Yamada K."/>
            <person name="Lim J."/>
            <person name="Dale J.M."/>
            <person name="Chen H."/>
            <person name="Shinn P."/>
            <person name="Palm C.J."/>
            <person name="Southwick A.M."/>
            <person name="Wu H.C."/>
            <person name="Kim C.J."/>
            <person name="Nguyen M."/>
            <person name="Pham P.K."/>
            <person name="Cheuk R.F."/>
            <person name="Karlin-Newmann G."/>
            <person name="Liu S.X."/>
            <person name="Lam B."/>
            <person name="Sakano H."/>
            <person name="Wu T."/>
            <person name="Yu G."/>
            <person name="Miranda M."/>
            <person name="Quach H.L."/>
            <person name="Tripp M."/>
            <person name="Chang C.H."/>
            <person name="Lee J.M."/>
            <person name="Toriumi M.J."/>
            <person name="Chan M.M."/>
            <person name="Tang C.C."/>
            <person name="Onodera C.S."/>
            <person name="Deng J.M."/>
            <person name="Akiyama K."/>
            <person name="Ansari Y."/>
            <person name="Arakawa T."/>
            <person name="Banh J."/>
            <person name="Banno F."/>
            <person name="Bowser L."/>
            <person name="Brooks S.Y."/>
            <person name="Carninci P."/>
            <person name="Chao Q."/>
            <person name="Choy N."/>
            <person name="Enju A."/>
            <person name="Goldsmith A.D."/>
            <person name="Gurjal M."/>
            <person name="Hansen N.F."/>
            <person name="Hayashizaki Y."/>
            <person name="Johnson-Hopson C."/>
            <person name="Hsuan V.W."/>
            <person name="Iida K."/>
            <person name="Karnes M."/>
            <person name="Khan S."/>
            <person name="Koesema E."/>
            <person name="Ishida J."/>
            <person name="Jiang P.X."/>
            <person name="Jones T."/>
            <person name="Kawai J."/>
            <person name="Kamiya A."/>
            <person name="Meyers C."/>
            <person name="Nakajima M."/>
            <person name="Narusaka M."/>
            <person name="Seki M."/>
            <person name="Sakurai T."/>
            <person name="Satou M."/>
            <person name="Tamse R."/>
            <person name="Vaysberg M."/>
            <person name="Wallender E.K."/>
            <person name="Wong C."/>
            <person name="Yamamura Y."/>
            <person name="Yuan S."/>
            <person name="Shinozaki K."/>
            <person name="Davis R.W."/>
            <person name="Theologis A."/>
            <person name="Ecker J.R."/>
        </authorList>
    </citation>
    <scope>NUCLEOTIDE SEQUENCE [LARGE SCALE MRNA]</scope>
    <source>
        <strain>cv. Columbia</strain>
    </source>
</reference>
<reference key="4">
    <citation type="journal article" date="2006" name="J. Exp. Bot.">
        <title>RACK1 mediates multiple hormone responsiveness and developmental processes in Arabidopsis.</title>
        <authorList>
            <person name="Chen J.G."/>
            <person name="Ullah H."/>
            <person name="Temple B."/>
            <person name="Liang J."/>
            <person name="Guo J."/>
            <person name="Alonso J.M."/>
            <person name="Ecker J.R."/>
            <person name="Jones A.M."/>
        </authorList>
    </citation>
    <scope>TISSUE SPECIFICITY</scope>
</reference>
<reference key="5">
    <citation type="journal article" date="2008" name="BMC Plant Biol.">
        <title>RACK1 genes regulate plant development with unequal genetic redundancy in Arabidopsis.</title>
        <authorList>
            <person name="Guo J."/>
            <person name="Chen J.G."/>
        </authorList>
    </citation>
    <scope>FUNCTION</scope>
    <scope>TISSUE SPECIFICITY</scope>
    <scope>DISRUPTION PHENOTYPE</scope>
</reference>
<reference key="6">
    <citation type="journal article" date="2015" name="Nature">
        <title>Pathogen-secreted proteases activate a novel plant immune pathway.</title>
        <authorList>
            <person name="Cheng Z."/>
            <person name="Li J.F."/>
            <person name="Niu Y."/>
            <person name="Zhang X.C."/>
            <person name="Woody O.Z."/>
            <person name="Xiong Y."/>
            <person name="Djonovic S."/>
            <person name="Millet Y."/>
            <person name="Bush J."/>
            <person name="McConkey B.J."/>
            <person name="Sheen J."/>
            <person name="Ausubel F.M."/>
        </authorList>
    </citation>
    <scope>FUNCTION</scope>
    <scope>INTERACTION WITH GB1; MEKK1; MKK4; MKK5; MPK3 AND MPK6</scope>
</reference>
<reference key="7">
    <citation type="journal article" date="2023" name="Plant Cell">
        <title>An updated nomenclature for plant ribosomal protein genes.</title>
        <authorList>
            <person name="Scarpin M.R."/>
            <person name="Busche M."/>
            <person name="Martinez R.E."/>
            <person name="Harper L.C."/>
            <person name="Reiser L."/>
            <person name="Szakonyi D."/>
            <person name="Merchante C."/>
            <person name="Lan T."/>
            <person name="Xiong W."/>
            <person name="Mo B."/>
            <person name="Tang G."/>
            <person name="Chen X."/>
            <person name="Bailey-Serres J."/>
            <person name="Browning K.S."/>
            <person name="Brunkard J.O."/>
        </authorList>
    </citation>
    <scope>NOMENCLATURE</scope>
</reference>
<feature type="chain" id="PRO_0000403655" description="Small ribosomal subunit protein RACK1x">
    <location>
        <begin position="1"/>
        <end position="326"/>
    </location>
</feature>
<feature type="repeat" description="WD 1">
    <location>
        <begin position="13"/>
        <end position="53"/>
    </location>
</feature>
<feature type="repeat" description="WD 2">
    <location>
        <begin position="61"/>
        <end position="100"/>
    </location>
</feature>
<feature type="repeat" description="WD 3">
    <location>
        <begin position="103"/>
        <end position="142"/>
    </location>
</feature>
<feature type="repeat" description="WD 4">
    <location>
        <begin position="147"/>
        <end position="188"/>
    </location>
</feature>
<feature type="repeat" description="WD 5">
    <location>
        <begin position="191"/>
        <end position="230"/>
    </location>
</feature>
<feature type="repeat" description="WD 6">
    <location>
        <begin position="232"/>
        <end position="270"/>
    </location>
</feature>
<feature type="repeat" description="WD 7">
    <location>
        <begin position="290"/>
        <end position="326"/>
    </location>
</feature>
<accession>Q9LV28</accession>